<accession>Q3ZV00</accession>
<feature type="chain" id="PRO_0000359185" description="Acireductone dioxygenase">
    <location>
        <begin position="1"/>
        <end position="180"/>
    </location>
</feature>
<feature type="binding site" evidence="1">
    <location>
        <position position="97"/>
    </location>
    <ligand>
        <name>Fe(2+)</name>
        <dbReference type="ChEBI" id="CHEBI:29033"/>
    </ligand>
</feature>
<feature type="binding site" evidence="1">
    <location>
        <position position="97"/>
    </location>
    <ligand>
        <name>Ni(2+)</name>
        <dbReference type="ChEBI" id="CHEBI:49786"/>
    </ligand>
</feature>
<feature type="binding site" evidence="1">
    <location>
        <position position="99"/>
    </location>
    <ligand>
        <name>Fe(2+)</name>
        <dbReference type="ChEBI" id="CHEBI:29033"/>
    </ligand>
</feature>
<feature type="binding site" evidence="1">
    <location>
        <position position="99"/>
    </location>
    <ligand>
        <name>Ni(2+)</name>
        <dbReference type="ChEBI" id="CHEBI:49786"/>
    </ligand>
</feature>
<feature type="binding site" evidence="1">
    <location>
        <position position="103"/>
    </location>
    <ligand>
        <name>Fe(2+)</name>
        <dbReference type="ChEBI" id="CHEBI:29033"/>
    </ligand>
</feature>
<feature type="binding site" evidence="1">
    <location>
        <position position="103"/>
    </location>
    <ligand>
        <name>Ni(2+)</name>
        <dbReference type="ChEBI" id="CHEBI:49786"/>
    </ligand>
</feature>
<feature type="binding site" evidence="1">
    <location>
        <position position="141"/>
    </location>
    <ligand>
        <name>Fe(2+)</name>
        <dbReference type="ChEBI" id="CHEBI:29033"/>
    </ligand>
</feature>
<feature type="binding site" evidence="1">
    <location>
        <position position="141"/>
    </location>
    <ligand>
        <name>Ni(2+)</name>
        <dbReference type="ChEBI" id="CHEBI:49786"/>
    </ligand>
</feature>
<feature type="site" description="May play a role in metal incorporation in vivo" evidence="1">
    <location>
        <position position="96"/>
    </location>
</feature>
<feature type="site" description="May play a role in transmitting local conformational changes" evidence="1">
    <location>
        <position position="102"/>
    </location>
</feature>
<feature type="site" description="Important to generate the dianion" evidence="1">
    <location>
        <position position="105"/>
    </location>
</feature>
<dbReference type="EC" id="1.13.11.54" evidence="1"/>
<dbReference type="EC" id="1.13.11.53" evidence="1"/>
<dbReference type="EMBL" id="AM075208">
    <property type="protein sequence ID" value="CAJ27334.1"/>
    <property type="molecule type" value="Genomic_DNA"/>
</dbReference>
<dbReference type="RefSeq" id="WP_007865532.1">
    <property type="nucleotide sequence ID" value="NZ_JAVSDM010000004.1"/>
</dbReference>
<dbReference type="SMR" id="Q3ZV00"/>
<dbReference type="STRING" id="28141.CSK29544_04013"/>
<dbReference type="UniPathway" id="UPA00904">
    <property type="reaction ID" value="UER00878"/>
</dbReference>
<dbReference type="GO" id="GO:0010308">
    <property type="term" value="F:acireductone dioxygenase (Ni2+-requiring) activity"/>
    <property type="evidence" value="ECO:0007669"/>
    <property type="project" value="UniProtKB-UniRule"/>
</dbReference>
<dbReference type="GO" id="GO:0010309">
    <property type="term" value="F:acireductone dioxygenase [iron(II)-requiring] activity"/>
    <property type="evidence" value="ECO:0007669"/>
    <property type="project" value="UniProtKB-UniRule"/>
</dbReference>
<dbReference type="GO" id="GO:0005506">
    <property type="term" value="F:iron ion binding"/>
    <property type="evidence" value="ECO:0007669"/>
    <property type="project" value="UniProtKB-UniRule"/>
</dbReference>
<dbReference type="GO" id="GO:0016151">
    <property type="term" value="F:nickel cation binding"/>
    <property type="evidence" value="ECO:0007669"/>
    <property type="project" value="UniProtKB-UniRule"/>
</dbReference>
<dbReference type="GO" id="GO:0019509">
    <property type="term" value="P:L-methionine salvage from methylthioadenosine"/>
    <property type="evidence" value="ECO:0007669"/>
    <property type="project" value="UniProtKB-UniRule"/>
</dbReference>
<dbReference type="GO" id="GO:0019284">
    <property type="term" value="P:L-methionine salvage from S-adenosylmethionine"/>
    <property type="evidence" value="ECO:0007669"/>
    <property type="project" value="InterPro"/>
</dbReference>
<dbReference type="CDD" id="cd02232">
    <property type="entry name" value="cupin_ARD"/>
    <property type="match status" value="1"/>
</dbReference>
<dbReference type="Gene3D" id="2.60.120.10">
    <property type="entry name" value="Jelly Rolls"/>
    <property type="match status" value="1"/>
</dbReference>
<dbReference type="HAMAP" id="MF_01682">
    <property type="entry name" value="Salvage_MtnD"/>
    <property type="match status" value="1"/>
</dbReference>
<dbReference type="InterPro" id="IPR004313">
    <property type="entry name" value="ARD"/>
</dbReference>
<dbReference type="InterPro" id="IPR023956">
    <property type="entry name" value="ARD_bac"/>
</dbReference>
<dbReference type="InterPro" id="IPR014710">
    <property type="entry name" value="RmlC-like_jellyroll"/>
</dbReference>
<dbReference type="InterPro" id="IPR011051">
    <property type="entry name" value="RmlC_Cupin_sf"/>
</dbReference>
<dbReference type="PANTHER" id="PTHR23418">
    <property type="entry name" value="ACIREDUCTONE DIOXYGENASE"/>
    <property type="match status" value="1"/>
</dbReference>
<dbReference type="PANTHER" id="PTHR23418:SF0">
    <property type="entry name" value="ACIREDUCTONE DIOXYGENASE"/>
    <property type="match status" value="1"/>
</dbReference>
<dbReference type="Pfam" id="PF03079">
    <property type="entry name" value="ARD"/>
    <property type="match status" value="1"/>
</dbReference>
<dbReference type="SUPFAM" id="SSF51182">
    <property type="entry name" value="RmlC-like cupins"/>
    <property type="match status" value="1"/>
</dbReference>
<comment type="function">
    <text evidence="1">Catalyzes 2 different reactions between oxygen and the acireductone 1,2-dihydroxy-3-keto-5-methylthiopentene (DHK-MTPene) depending upon the metal bound in the active site. Fe-containing acireductone dioxygenase (Fe-ARD) produces formate and 2-keto-4-methylthiobutyrate (KMTB), the alpha-ketoacid precursor of methionine in the methionine recycle pathway. Ni-containing acireductone dioxygenase (Ni-ARD) produces methylthiopropionate, carbon monoxide and formate, and does not lie on the methionine recycle pathway.</text>
</comment>
<comment type="catalytic activity">
    <reaction evidence="1">
        <text>1,2-dihydroxy-5-(methylsulfanyl)pent-1-en-3-one + O2 = 3-(methylsulfanyl)propanoate + CO + formate + 2 H(+)</text>
        <dbReference type="Rhea" id="RHEA:14161"/>
        <dbReference type="ChEBI" id="CHEBI:15378"/>
        <dbReference type="ChEBI" id="CHEBI:15379"/>
        <dbReference type="ChEBI" id="CHEBI:15740"/>
        <dbReference type="ChEBI" id="CHEBI:17245"/>
        <dbReference type="ChEBI" id="CHEBI:49016"/>
        <dbReference type="ChEBI" id="CHEBI:49252"/>
        <dbReference type="EC" id="1.13.11.53"/>
    </reaction>
</comment>
<comment type="catalytic activity">
    <reaction evidence="1">
        <text>1,2-dihydroxy-5-(methylsulfanyl)pent-1-en-3-one + O2 = 4-methylsulfanyl-2-oxobutanoate + formate + 2 H(+)</text>
        <dbReference type="Rhea" id="RHEA:24504"/>
        <dbReference type="ChEBI" id="CHEBI:15378"/>
        <dbReference type="ChEBI" id="CHEBI:15379"/>
        <dbReference type="ChEBI" id="CHEBI:15740"/>
        <dbReference type="ChEBI" id="CHEBI:16723"/>
        <dbReference type="ChEBI" id="CHEBI:49252"/>
        <dbReference type="EC" id="1.13.11.54"/>
    </reaction>
</comment>
<comment type="cofactor">
    <cofactor evidence="1">
        <name>Fe(2+)</name>
        <dbReference type="ChEBI" id="CHEBI:29033"/>
    </cofactor>
    <text evidence="1">Binds 1 Fe(2+) cation per monomer.</text>
</comment>
<comment type="cofactor">
    <cofactor evidence="1">
        <name>Ni(2+)</name>
        <dbReference type="ChEBI" id="CHEBI:49786"/>
    </cofactor>
    <text evidence="1">Binds 1 nickel ion per monomer.</text>
</comment>
<comment type="pathway">
    <text evidence="1">Amino-acid biosynthesis; L-methionine biosynthesis via salvage pathway; L-methionine from S-methyl-5-thio-alpha-D-ribose 1-phosphate: step 5/6.</text>
</comment>
<comment type="subunit">
    <text evidence="1">Monomer.</text>
</comment>
<comment type="similarity">
    <text evidence="1">Belongs to the acireductone dioxygenase (ARD) family.</text>
</comment>
<sequence>MSALTIFADNGASEPLWQSTDADAIREQLNAQGVRFERWQADRDLGDDPTPEAVLTAYQHAIDLLVAEKGYQSWDVISMRADNPQKEALRGKFLNEHTHGEDEVRFFVEGAGLFCLHIGDKVYQVLCEKNDLISVPAGTPHWFDMGSEPHFTAIRIFDNPEGWIANFTGSPIAEAYPRLA</sequence>
<protein>
    <recommendedName>
        <fullName evidence="1">Acireductone dioxygenase</fullName>
    </recommendedName>
    <alternativeName>
        <fullName evidence="1">1,2-dihydroxy-3-keto-5-methylthiopentene dioxygenase</fullName>
        <shortName evidence="1">DHK-MTPene dioxygenase</shortName>
    </alternativeName>
    <alternativeName>
        <fullName evidence="1">Acireductone dioxygenase (Fe(2+)-requiring)</fullName>
        <shortName evidence="1">ARD'</shortName>
        <shortName evidence="1">Fe-ARD</shortName>
        <ecNumber evidence="1">1.13.11.54</ecNumber>
    </alternativeName>
    <alternativeName>
        <fullName evidence="1">Acireductone dioxygenase (Ni(2+)-requiring)</fullName>
        <shortName evidence="1">ARD</shortName>
        <shortName evidence="1">Ni-ARD</shortName>
        <ecNumber evidence="1">1.13.11.53</ecNumber>
    </alternativeName>
</protein>
<reference key="1">
    <citation type="journal article" date="2006" name="Syst. Appl. Microbiol.">
        <title>Molecular characterization of the alpha-glucosidase activity in Enterobacter sakazakii reveals the presence of a putative gene cluster for palatinose metabolism.</title>
        <authorList>
            <person name="Lehner A."/>
            <person name="Riedel K."/>
            <person name="Rattei T."/>
            <person name="Ruepp A."/>
            <person name="Frishman D."/>
            <person name="Breeuwer P."/>
            <person name="Diep B."/>
            <person name="Eberl L."/>
            <person name="Stephan R."/>
        </authorList>
    </citation>
    <scope>NUCLEOTIDE SEQUENCE [GENOMIC DNA]</scope>
    <source>
        <strain>858</strain>
    </source>
</reference>
<gene>
    <name evidence="1" type="primary">mtnD</name>
</gene>
<proteinExistence type="inferred from homology"/>
<name>MTND_CROSK</name>
<keyword id="KW-0028">Amino-acid biosynthesis</keyword>
<keyword id="KW-0223">Dioxygenase</keyword>
<keyword id="KW-0408">Iron</keyword>
<keyword id="KW-0479">Metal-binding</keyword>
<keyword id="KW-0486">Methionine biosynthesis</keyword>
<keyword id="KW-0533">Nickel</keyword>
<keyword id="KW-0560">Oxidoreductase</keyword>
<evidence type="ECO:0000255" key="1">
    <source>
        <dbReference type="HAMAP-Rule" id="MF_01682"/>
    </source>
</evidence>
<organism>
    <name type="scientific">Cronobacter sakazakii</name>
    <name type="common">Enterobacter sakazakii</name>
    <dbReference type="NCBI Taxonomy" id="28141"/>
    <lineage>
        <taxon>Bacteria</taxon>
        <taxon>Pseudomonadati</taxon>
        <taxon>Pseudomonadota</taxon>
        <taxon>Gammaproteobacteria</taxon>
        <taxon>Enterobacterales</taxon>
        <taxon>Enterobacteriaceae</taxon>
        <taxon>Cronobacter</taxon>
    </lineage>
</organism>